<feature type="chain" id="PRO_1000050914" description="Ribulokinase">
    <location>
        <begin position="1"/>
        <end position="545"/>
    </location>
</feature>
<evidence type="ECO:0000255" key="1">
    <source>
        <dbReference type="HAMAP-Rule" id="MF_00520"/>
    </source>
</evidence>
<organism>
    <name type="scientific">Staphylococcus aureus (strain Mu3 / ATCC 700698)</name>
    <dbReference type="NCBI Taxonomy" id="418127"/>
    <lineage>
        <taxon>Bacteria</taxon>
        <taxon>Bacillati</taxon>
        <taxon>Bacillota</taxon>
        <taxon>Bacilli</taxon>
        <taxon>Bacillales</taxon>
        <taxon>Staphylococcaceae</taxon>
        <taxon>Staphylococcus</taxon>
    </lineage>
</organism>
<proteinExistence type="inferred from homology"/>
<sequence>MSYSIGIDYGTASGRVFLINTTNGQVVSKFVKPYTHGVIESELNGLKIPHTYALQNSNDYLEIMEEGISYIVRESKIDPVNIVGIGIDFTSSTIIFTDENLNPVHNLKQFKNNPHAYVKLWKHHGAYKEAEKLYQTAIENNNKWLGHYGYNVSSEWMIPKIMEVMNRAPEIMEKTAYIMEAGDWIVNKLTNKNVRSNCGLGFKAFWEEETGFHYDLFDKIDPKLSKVIQDKVSAPVVNIGEVVGKLDDKMAQKLGLSKETMVSPFIIDAHASLLGIGSEKDKEMTMVMGTSTCHLMLNEKQHQVPGISGSVKGAIIPELFAYEAGQSAVGDLFEYVAKQAPKSYVDEAANRNMTVFELMNEKIKHQMPGESGLIALDWHNGNRSVLSDSNLTGCIFGLTLQTKHEDIYRAYLEATAFGTKMIMQQYQDWHMEVEKVFACGGIPKKNAVMMDIYANVLNKKLIVMDSEYAPAIGAAILGAVSGGAHNSINDAVDAMKEPILYEINPEAEKVQRYETLFKAYKALHDIHGYKKANIMKDIQSLRVEG</sequence>
<reference key="1">
    <citation type="journal article" date="2008" name="Antimicrob. Agents Chemother.">
        <title>Mutated response regulator graR is responsible for phenotypic conversion of Staphylococcus aureus from heterogeneous vancomycin-intermediate resistance to vancomycin-intermediate resistance.</title>
        <authorList>
            <person name="Neoh H.-M."/>
            <person name="Cui L."/>
            <person name="Yuzawa H."/>
            <person name="Takeuchi F."/>
            <person name="Matsuo M."/>
            <person name="Hiramatsu K."/>
        </authorList>
    </citation>
    <scope>NUCLEOTIDE SEQUENCE [LARGE SCALE GENOMIC DNA]</scope>
    <source>
        <strain>Mu3 / ATCC 700698</strain>
    </source>
</reference>
<name>ARAB_STAA1</name>
<protein>
    <recommendedName>
        <fullName evidence="1">Ribulokinase</fullName>
        <ecNumber evidence="1">2.7.1.16</ecNumber>
    </recommendedName>
</protein>
<dbReference type="EC" id="2.7.1.16" evidence="1"/>
<dbReference type="EMBL" id="AP009324">
    <property type="protein sequence ID" value="BAF77433.1"/>
    <property type="molecule type" value="Genomic_DNA"/>
</dbReference>
<dbReference type="RefSeq" id="WP_000122354.1">
    <property type="nucleotide sequence ID" value="NC_009782.1"/>
</dbReference>
<dbReference type="SMR" id="A7WYY2"/>
<dbReference type="KEGG" id="saw:SAHV_0550"/>
<dbReference type="HOGENOM" id="CLU_009281_9_1_9"/>
<dbReference type="UniPathway" id="UPA00145">
    <property type="reaction ID" value="UER00566"/>
</dbReference>
<dbReference type="GO" id="GO:0005737">
    <property type="term" value="C:cytoplasm"/>
    <property type="evidence" value="ECO:0007669"/>
    <property type="project" value="TreeGrafter"/>
</dbReference>
<dbReference type="GO" id="GO:0005524">
    <property type="term" value="F:ATP binding"/>
    <property type="evidence" value="ECO:0007669"/>
    <property type="project" value="UniProtKB-KW"/>
</dbReference>
<dbReference type="GO" id="GO:0019150">
    <property type="term" value="F:D-ribulokinase activity"/>
    <property type="evidence" value="ECO:0007669"/>
    <property type="project" value="TreeGrafter"/>
</dbReference>
<dbReference type="GO" id="GO:0008741">
    <property type="term" value="F:ribulokinase activity"/>
    <property type="evidence" value="ECO:0007669"/>
    <property type="project" value="UniProtKB-UniRule"/>
</dbReference>
<dbReference type="GO" id="GO:0019569">
    <property type="term" value="P:L-arabinose catabolic process to xylulose 5-phosphate"/>
    <property type="evidence" value="ECO:0007669"/>
    <property type="project" value="UniProtKB-UniRule"/>
</dbReference>
<dbReference type="CDD" id="cd07781">
    <property type="entry name" value="ASKHA_NBD_FGGY_L-RBK"/>
    <property type="match status" value="1"/>
</dbReference>
<dbReference type="Gene3D" id="1.20.58.2240">
    <property type="match status" value="1"/>
</dbReference>
<dbReference type="Gene3D" id="3.30.420.40">
    <property type="match status" value="1"/>
</dbReference>
<dbReference type="HAMAP" id="MF_00520">
    <property type="entry name" value="Ribulokinase"/>
    <property type="match status" value="1"/>
</dbReference>
<dbReference type="InterPro" id="IPR043129">
    <property type="entry name" value="ATPase_NBD"/>
</dbReference>
<dbReference type="InterPro" id="IPR000577">
    <property type="entry name" value="Carb_kinase_FGGY"/>
</dbReference>
<dbReference type="InterPro" id="IPR018485">
    <property type="entry name" value="FGGY_C"/>
</dbReference>
<dbReference type="InterPro" id="IPR018484">
    <property type="entry name" value="FGGY_N"/>
</dbReference>
<dbReference type="InterPro" id="IPR005929">
    <property type="entry name" value="Ribulokinase"/>
</dbReference>
<dbReference type="NCBIfam" id="NF003154">
    <property type="entry name" value="PRK04123.1"/>
    <property type="match status" value="1"/>
</dbReference>
<dbReference type="PANTHER" id="PTHR43435:SF4">
    <property type="entry name" value="FGGY CARBOHYDRATE KINASE DOMAIN-CONTAINING PROTEIN"/>
    <property type="match status" value="1"/>
</dbReference>
<dbReference type="PANTHER" id="PTHR43435">
    <property type="entry name" value="RIBULOKINASE"/>
    <property type="match status" value="1"/>
</dbReference>
<dbReference type="Pfam" id="PF02782">
    <property type="entry name" value="FGGY_C"/>
    <property type="match status" value="1"/>
</dbReference>
<dbReference type="Pfam" id="PF00370">
    <property type="entry name" value="FGGY_N"/>
    <property type="match status" value="1"/>
</dbReference>
<dbReference type="PIRSF" id="PIRSF000538">
    <property type="entry name" value="GlpK"/>
    <property type="match status" value="1"/>
</dbReference>
<dbReference type="SUPFAM" id="SSF53067">
    <property type="entry name" value="Actin-like ATPase domain"/>
    <property type="match status" value="2"/>
</dbReference>
<accession>A7WYY2</accession>
<comment type="catalytic activity">
    <reaction evidence="1">
        <text>D-ribulose + ATP = D-ribulose 5-phosphate + ADP + H(+)</text>
        <dbReference type="Rhea" id="RHEA:17601"/>
        <dbReference type="ChEBI" id="CHEBI:15378"/>
        <dbReference type="ChEBI" id="CHEBI:17173"/>
        <dbReference type="ChEBI" id="CHEBI:30616"/>
        <dbReference type="ChEBI" id="CHEBI:58121"/>
        <dbReference type="ChEBI" id="CHEBI:456216"/>
        <dbReference type="EC" id="2.7.1.16"/>
    </reaction>
</comment>
<comment type="catalytic activity">
    <reaction evidence="1">
        <text>L-ribulose + ATP = L-ribulose 5-phosphate + ADP + H(+)</text>
        <dbReference type="Rhea" id="RHEA:22072"/>
        <dbReference type="ChEBI" id="CHEBI:15378"/>
        <dbReference type="ChEBI" id="CHEBI:16880"/>
        <dbReference type="ChEBI" id="CHEBI:30616"/>
        <dbReference type="ChEBI" id="CHEBI:58226"/>
        <dbReference type="ChEBI" id="CHEBI:456216"/>
        <dbReference type="EC" id="2.7.1.16"/>
    </reaction>
</comment>
<comment type="pathway">
    <text evidence="1">Carbohydrate degradation; L-arabinose degradation via L-ribulose; D-xylulose 5-phosphate from L-arabinose (bacterial route): step 2/3.</text>
</comment>
<comment type="similarity">
    <text evidence="1">Belongs to the ribulokinase family.</text>
</comment>
<gene>
    <name evidence="1" type="primary">araB</name>
    <name type="ordered locus">SAHV_0550</name>
</gene>
<keyword id="KW-0054">Arabinose catabolism</keyword>
<keyword id="KW-0067">ATP-binding</keyword>
<keyword id="KW-0119">Carbohydrate metabolism</keyword>
<keyword id="KW-0418">Kinase</keyword>
<keyword id="KW-0547">Nucleotide-binding</keyword>
<keyword id="KW-0808">Transferase</keyword>